<dbReference type="EC" id="1.1.1.94" evidence="1"/>
<dbReference type="EMBL" id="CP000546">
    <property type="protein sequence ID" value="ABN01609.1"/>
    <property type="molecule type" value="Genomic_DNA"/>
</dbReference>
<dbReference type="SMR" id="A2S629"/>
<dbReference type="KEGG" id="bml:BMA10229_A1415"/>
<dbReference type="HOGENOM" id="CLU_033449_0_2_4"/>
<dbReference type="UniPathway" id="UPA00940"/>
<dbReference type="Proteomes" id="UP000002283">
    <property type="component" value="Chromosome I"/>
</dbReference>
<dbReference type="GO" id="GO:0005829">
    <property type="term" value="C:cytosol"/>
    <property type="evidence" value="ECO:0007669"/>
    <property type="project" value="TreeGrafter"/>
</dbReference>
<dbReference type="GO" id="GO:0047952">
    <property type="term" value="F:glycerol-3-phosphate dehydrogenase [NAD(P)+] activity"/>
    <property type="evidence" value="ECO:0007669"/>
    <property type="project" value="UniProtKB-UniRule"/>
</dbReference>
<dbReference type="GO" id="GO:0051287">
    <property type="term" value="F:NAD binding"/>
    <property type="evidence" value="ECO:0007669"/>
    <property type="project" value="InterPro"/>
</dbReference>
<dbReference type="GO" id="GO:0005975">
    <property type="term" value="P:carbohydrate metabolic process"/>
    <property type="evidence" value="ECO:0007669"/>
    <property type="project" value="InterPro"/>
</dbReference>
<dbReference type="GO" id="GO:0046167">
    <property type="term" value="P:glycerol-3-phosphate biosynthetic process"/>
    <property type="evidence" value="ECO:0007669"/>
    <property type="project" value="UniProtKB-UniRule"/>
</dbReference>
<dbReference type="GO" id="GO:0046168">
    <property type="term" value="P:glycerol-3-phosphate catabolic process"/>
    <property type="evidence" value="ECO:0007669"/>
    <property type="project" value="InterPro"/>
</dbReference>
<dbReference type="GO" id="GO:0006650">
    <property type="term" value="P:glycerophospholipid metabolic process"/>
    <property type="evidence" value="ECO:0007669"/>
    <property type="project" value="UniProtKB-UniRule"/>
</dbReference>
<dbReference type="GO" id="GO:0008654">
    <property type="term" value="P:phospholipid biosynthetic process"/>
    <property type="evidence" value="ECO:0007669"/>
    <property type="project" value="UniProtKB-KW"/>
</dbReference>
<dbReference type="FunFam" id="1.10.1040.10:FF:000001">
    <property type="entry name" value="Glycerol-3-phosphate dehydrogenase [NAD(P)+]"/>
    <property type="match status" value="1"/>
</dbReference>
<dbReference type="FunFam" id="3.40.50.720:FF:000019">
    <property type="entry name" value="Glycerol-3-phosphate dehydrogenase [NAD(P)+]"/>
    <property type="match status" value="1"/>
</dbReference>
<dbReference type="Gene3D" id="1.10.1040.10">
    <property type="entry name" value="N-(1-d-carboxylethyl)-l-norvaline Dehydrogenase, domain 2"/>
    <property type="match status" value="1"/>
</dbReference>
<dbReference type="Gene3D" id="3.40.50.720">
    <property type="entry name" value="NAD(P)-binding Rossmann-like Domain"/>
    <property type="match status" value="1"/>
</dbReference>
<dbReference type="HAMAP" id="MF_00394">
    <property type="entry name" value="NAD_Glyc3P_dehydrog"/>
    <property type="match status" value="1"/>
</dbReference>
<dbReference type="InterPro" id="IPR008927">
    <property type="entry name" value="6-PGluconate_DH-like_C_sf"/>
</dbReference>
<dbReference type="InterPro" id="IPR013328">
    <property type="entry name" value="6PGD_dom2"/>
</dbReference>
<dbReference type="InterPro" id="IPR006168">
    <property type="entry name" value="G3P_DH_NAD-dep"/>
</dbReference>
<dbReference type="InterPro" id="IPR006109">
    <property type="entry name" value="G3P_DH_NAD-dep_C"/>
</dbReference>
<dbReference type="InterPro" id="IPR011128">
    <property type="entry name" value="G3P_DH_NAD-dep_N"/>
</dbReference>
<dbReference type="InterPro" id="IPR036291">
    <property type="entry name" value="NAD(P)-bd_dom_sf"/>
</dbReference>
<dbReference type="NCBIfam" id="NF000940">
    <property type="entry name" value="PRK00094.1-2"/>
    <property type="match status" value="1"/>
</dbReference>
<dbReference type="NCBIfam" id="NF000942">
    <property type="entry name" value="PRK00094.1-4"/>
    <property type="match status" value="1"/>
</dbReference>
<dbReference type="PANTHER" id="PTHR11728">
    <property type="entry name" value="GLYCEROL-3-PHOSPHATE DEHYDROGENASE"/>
    <property type="match status" value="1"/>
</dbReference>
<dbReference type="PANTHER" id="PTHR11728:SF1">
    <property type="entry name" value="GLYCEROL-3-PHOSPHATE DEHYDROGENASE [NAD(+)] 2, CHLOROPLASTIC"/>
    <property type="match status" value="1"/>
</dbReference>
<dbReference type="Pfam" id="PF07479">
    <property type="entry name" value="NAD_Gly3P_dh_C"/>
    <property type="match status" value="1"/>
</dbReference>
<dbReference type="Pfam" id="PF01210">
    <property type="entry name" value="NAD_Gly3P_dh_N"/>
    <property type="match status" value="1"/>
</dbReference>
<dbReference type="PIRSF" id="PIRSF000114">
    <property type="entry name" value="Glycerol-3-P_dh"/>
    <property type="match status" value="1"/>
</dbReference>
<dbReference type="PRINTS" id="PR00077">
    <property type="entry name" value="GPDHDRGNASE"/>
</dbReference>
<dbReference type="SUPFAM" id="SSF48179">
    <property type="entry name" value="6-phosphogluconate dehydrogenase C-terminal domain-like"/>
    <property type="match status" value="1"/>
</dbReference>
<dbReference type="SUPFAM" id="SSF51735">
    <property type="entry name" value="NAD(P)-binding Rossmann-fold domains"/>
    <property type="match status" value="1"/>
</dbReference>
<dbReference type="PROSITE" id="PS00957">
    <property type="entry name" value="NAD_G3PDH"/>
    <property type="match status" value="1"/>
</dbReference>
<proteinExistence type="inferred from homology"/>
<organism>
    <name type="scientific">Burkholderia mallei (strain NCTC 10229)</name>
    <dbReference type="NCBI Taxonomy" id="412022"/>
    <lineage>
        <taxon>Bacteria</taxon>
        <taxon>Pseudomonadati</taxon>
        <taxon>Pseudomonadota</taxon>
        <taxon>Betaproteobacteria</taxon>
        <taxon>Burkholderiales</taxon>
        <taxon>Burkholderiaceae</taxon>
        <taxon>Burkholderia</taxon>
        <taxon>pseudomallei group</taxon>
    </lineage>
</organism>
<accession>A2S629</accession>
<sequence>MLSMKVAVLGAGAWGTALAAHLAVRHDTLLWARDAALVAELAARRENARYLGGVALPPGLRYEADLATALSHAQADDALCVIAAPVAGLRALCRAMRDARRVPAHFVWVCKGFEADTRRLPHQMVAEELPDHASYGVLSGPSFAREVAQGLPVALTVASASAACRERTLAAFHHGAMRIYTGDDVVGVEVGGAVKNVLAIATGIADGLGLGLNARAALVTRGLAEMSRLGVALGGRAETFTGLTGLGDLILTATGDLSRNRSVGLQLAAGRSLDDILAALGHVAEGVRCARAVLSIARERGVDMPITEAVCAVLFDGVAPRDAVSGLLRRDAKAE</sequence>
<evidence type="ECO:0000255" key="1">
    <source>
        <dbReference type="HAMAP-Rule" id="MF_00394"/>
    </source>
</evidence>
<reference key="1">
    <citation type="journal article" date="2010" name="Genome Biol. Evol.">
        <title>Continuing evolution of Burkholderia mallei through genome reduction and large-scale rearrangements.</title>
        <authorList>
            <person name="Losada L."/>
            <person name="Ronning C.M."/>
            <person name="DeShazer D."/>
            <person name="Woods D."/>
            <person name="Fedorova N."/>
            <person name="Kim H.S."/>
            <person name="Shabalina S.A."/>
            <person name="Pearson T.R."/>
            <person name="Brinkac L."/>
            <person name="Tan P."/>
            <person name="Nandi T."/>
            <person name="Crabtree J."/>
            <person name="Badger J."/>
            <person name="Beckstrom-Sternberg S."/>
            <person name="Saqib M."/>
            <person name="Schutzer S.E."/>
            <person name="Keim P."/>
            <person name="Nierman W.C."/>
        </authorList>
    </citation>
    <scope>NUCLEOTIDE SEQUENCE [LARGE SCALE GENOMIC DNA]</scope>
    <source>
        <strain>NCTC 10229</strain>
    </source>
</reference>
<feature type="chain" id="PRO_1000049489" description="Glycerol-3-phosphate dehydrogenase [NAD(P)+]">
    <location>
        <begin position="1"/>
        <end position="335"/>
    </location>
</feature>
<feature type="active site" description="Proton acceptor" evidence="1">
    <location>
        <position position="195"/>
    </location>
</feature>
<feature type="binding site" evidence="1">
    <location>
        <position position="14"/>
    </location>
    <ligand>
        <name>NADPH</name>
        <dbReference type="ChEBI" id="CHEBI:57783"/>
    </ligand>
</feature>
<feature type="binding site" evidence="1">
    <location>
        <position position="33"/>
    </location>
    <ligand>
        <name>NADPH</name>
        <dbReference type="ChEBI" id="CHEBI:57783"/>
    </ligand>
</feature>
<feature type="binding site" evidence="1">
    <location>
        <position position="111"/>
    </location>
    <ligand>
        <name>NADPH</name>
        <dbReference type="ChEBI" id="CHEBI:57783"/>
    </ligand>
</feature>
<feature type="binding site" evidence="1">
    <location>
        <position position="111"/>
    </location>
    <ligand>
        <name>sn-glycerol 3-phosphate</name>
        <dbReference type="ChEBI" id="CHEBI:57597"/>
    </ligand>
</feature>
<feature type="binding site" evidence="1">
    <location>
        <position position="140"/>
    </location>
    <ligand>
        <name>sn-glycerol 3-phosphate</name>
        <dbReference type="ChEBI" id="CHEBI:57597"/>
    </ligand>
</feature>
<feature type="binding site" evidence="1">
    <location>
        <position position="142"/>
    </location>
    <ligand>
        <name>sn-glycerol 3-phosphate</name>
        <dbReference type="ChEBI" id="CHEBI:57597"/>
    </ligand>
</feature>
<feature type="binding site" evidence="1">
    <location>
        <position position="144"/>
    </location>
    <ligand>
        <name>NADPH</name>
        <dbReference type="ChEBI" id="CHEBI:57783"/>
    </ligand>
</feature>
<feature type="binding site" evidence="1">
    <location>
        <position position="195"/>
    </location>
    <ligand>
        <name>sn-glycerol 3-phosphate</name>
        <dbReference type="ChEBI" id="CHEBI:57597"/>
    </ligand>
</feature>
<feature type="binding site" evidence="1">
    <location>
        <position position="248"/>
    </location>
    <ligand>
        <name>sn-glycerol 3-phosphate</name>
        <dbReference type="ChEBI" id="CHEBI:57597"/>
    </ligand>
</feature>
<feature type="binding site" evidence="1">
    <location>
        <position position="258"/>
    </location>
    <ligand>
        <name>sn-glycerol 3-phosphate</name>
        <dbReference type="ChEBI" id="CHEBI:57597"/>
    </ligand>
</feature>
<feature type="binding site" evidence="1">
    <location>
        <position position="259"/>
    </location>
    <ligand>
        <name>NADPH</name>
        <dbReference type="ChEBI" id="CHEBI:57783"/>
    </ligand>
</feature>
<feature type="binding site" evidence="1">
    <location>
        <position position="259"/>
    </location>
    <ligand>
        <name>sn-glycerol 3-phosphate</name>
        <dbReference type="ChEBI" id="CHEBI:57597"/>
    </ligand>
</feature>
<feature type="binding site" evidence="1">
    <location>
        <position position="260"/>
    </location>
    <ligand>
        <name>sn-glycerol 3-phosphate</name>
        <dbReference type="ChEBI" id="CHEBI:57597"/>
    </ligand>
</feature>
<feature type="binding site" evidence="1">
    <location>
        <position position="283"/>
    </location>
    <ligand>
        <name>NADPH</name>
        <dbReference type="ChEBI" id="CHEBI:57783"/>
    </ligand>
</feature>
<feature type="binding site" evidence="1">
    <location>
        <position position="285"/>
    </location>
    <ligand>
        <name>NADPH</name>
        <dbReference type="ChEBI" id="CHEBI:57783"/>
    </ligand>
</feature>
<protein>
    <recommendedName>
        <fullName evidence="1">Glycerol-3-phosphate dehydrogenase [NAD(P)+]</fullName>
        <ecNumber evidence="1">1.1.1.94</ecNumber>
    </recommendedName>
    <alternativeName>
        <fullName evidence="1">NAD(P)(+)-dependent glycerol-3-phosphate dehydrogenase</fullName>
    </alternativeName>
    <alternativeName>
        <fullName evidence="1">NAD(P)H-dependent dihydroxyacetone-phosphate reductase</fullName>
    </alternativeName>
</protein>
<keyword id="KW-0963">Cytoplasm</keyword>
<keyword id="KW-0444">Lipid biosynthesis</keyword>
<keyword id="KW-0443">Lipid metabolism</keyword>
<keyword id="KW-0520">NAD</keyword>
<keyword id="KW-0521">NADP</keyword>
<keyword id="KW-0547">Nucleotide-binding</keyword>
<keyword id="KW-0560">Oxidoreductase</keyword>
<keyword id="KW-0594">Phospholipid biosynthesis</keyword>
<keyword id="KW-1208">Phospholipid metabolism</keyword>
<comment type="function">
    <text evidence="1">Catalyzes the reduction of the glycolytic intermediate dihydroxyacetone phosphate (DHAP) to sn-glycerol 3-phosphate (G3P), the key precursor for phospholipid synthesis.</text>
</comment>
<comment type="catalytic activity">
    <reaction evidence="1">
        <text>sn-glycerol 3-phosphate + NAD(+) = dihydroxyacetone phosphate + NADH + H(+)</text>
        <dbReference type="Rhea" id="RHEA:11092"/>
        <dbReference type="ChEBI" id="CHEBI:15378"/>
        <dbReference type="ChEBI" id="CHEBI:57540"/>
        <dbReference type="ChEBI" id="CHEBI:57597"/>
        <dbReference type="ChEBI" id="CHEBI:57642"/>
        <dbReference type="ChEBI" id="CHEBI:57945"/>
        <dbReference type="EC" id="1.1.1.94"/>
    </reaction>
    <physiologicalReaction direction="right-to-left" evidence="1">
        <dbReference type="Rhea" id="RHEA:11094"/>
    </physiologicalReaction>
</comment>
<comment type="catalytic activity">
    <reaction evidence="1">
        <text>sn-glycerol 3-phosphate + NADP(+) = dihydroxyacetone phosphate + NADPH + H(+)</text>
        <dbReference type="Rhea" id="RHEA:11096"/>
        <dbReference type="ChEBI" id="CHEBI:15378"/>
        <dbReference type="ChEBI" id="CHEBI:57597"/>
        <dbReference type="ChEBI" id="CHEBI:57642"/>
        <dbReference type="ChEBI" id="CHEBI:57783"/>
        <dbReference type="ChEBI" id="CHEBI:58349"/>
        <dbReference type="EC" id="1.1.1.94"/>
    </reaction>
    <physiologicalReaction direction="right-to-left" evidence="1">
        <dbReference type="Rhea" id="RHEA:11098"/>
    </physiologicalReaction>
</comment>
<comment type="pathway">
    <text evidence="1">Membrane lipid metabolism; glycerophospholipid metabolism.</text>
</comment>
<comment type="subcellular location">
    <subcellularLocation>
        <location evidence="1">Cytoplasm</location>
    </subcellularLocation>
</comment>
<comment type="similarity">
    <text evidence="1">Belongs to the NAD-dependent glycerol-3-phosphate dehydrogenase family.</text>
</comment>
<gene>
    <name evidence="1" type="primary">gpsA</name>
    <name type="ordered locus">BMA10229_A1415</name>
</gene>
<name>GPDA_BURM9</name>